<gene>
    <name type="primary">PS2</name>
    <name type="ordered locus">At1g73010</name>
    <name type="ORF">F3N23.21</name>
</gene>
<comment type="function">
    <text evidence="3">Catalyzes the specific cleavage of pyrophosphate.</text>
</comment>
<comment type="catalytic activity">
    <reaction evidence="3">
        <text>diphosphate + H2O = 2 phosphate + H(+)</text>
        <dbReference type="Rhea" id="RHEA:24576"/>
        <dbReference type="ChEBI" id="CHEBI:15377"/>
        <dbReference type="ChEBI" id="CHEBI:15378"/>
        <dbReference type="ChEBI" id="CHEBI:33019"/>
        <dbReference type="ChEBI" id="CHEBI:43474"/>
        <dbReference type="EC" id="3.6.1.1"/>
    </reaction>
</comment>
<comment type="cofactor">
    <cofactor evidence="3">
        <name>Mg(2+)</name>
        <dbReference type="ChEBI" id="CHEBI:18420"/>
    </cofactor>
    <cofactor evidence="3">
        <name>Fe(2+)</name>
        <dbReference type="ChEBI" id="CHEBI:29033"/>
    </cofactor>
    <cofactor evidence="3">
        <name>Ni(2+)</name>
        <dbReference type="ChEBI" id="CHEBI:49786"/>
    </cofactor>
    <cofactor evidence="3">
        <name>Co(2+)</name>
        <dbReference type="ChEBI" id="CHEBI:48828"/>
    </cofactor>
    <cofactor evidence="3">
        <name>Mn(2+)</name>
        <dbReference type="ChEBI" id="CHEBI:29035"/>
    </cofactor>
    <text evidence="3">Magnesium. Can also use iron, nickel, cobalt and manganese, but not zinc ions.</text>
</comment>
<comment type="biophysicochemical properties">
    <kinetics>
        <KM evidence="3">38.8 uM for pyrophosphate PPi (at 37 degrees Celsius)</KM>
        <Vmax evidence="3">0.3 nmol/min/ug enzyme with PPi as substrate (at 37 degrees Celsius)</Vmax>
    </kinetics>
    <phDependence>
        <text evidence="3">Optimum pH is 8-8.5.</text>
    </phDependence>
</comment>
<comment type="subunit">
    <text evidence="3">Tetramer.</text>
</comment>
<comment type="induction">
    <text evidence="2 3">Strongly induced upon phosphate (Pi) starvation.</text>
</comment>
<comment type="similarity">
    <text evidence="4">Belongs to the HAD-like hydrolase superfamily.</text>
</comment>
<comment type="sequence caution" evidence="4">
    <conflict type="erroneous gene model prediction">
        <sequence resource="EMBL-CDS" id="AAD55648"/>
    </conflict>
</comment>
<sequence>MAYNSNSNNNNNNIVVVFDFDKTIIDVDSDNWVIDELGFTDLFNQLLPTMPWNTLMDRMMKELHDQGKTIEEIKQVLRTIPIHPRVVPAIKSAHDLGCELRIVSDANMFFIETIVEHLGISELFSEINSNPGYVDERGTLKISPYHDFTKSPHSCSCGTCPPNMCKGLIIERIQQSLAKEGKKKMIYLGDGAGDYCPSLKLNTEDYVMPRKNFPVWDLISQNPMLIKAAIREWTDGQSMEMILIGTIEEIRLEEEKEKMLTSAENNCKMQTISIGINNVHHEPILPRALRVSQSS</sequence>
<feature type="chain" id="PRO_0000404256" description="Inorganic pyrophosphatase 1">
    <location>
        <begin position="1"/>
        <end position="295"/>
    </location>
</feature>
<feature type="active site" description="Nucleophile" evidence="4">
    <location>
        <position position="19"/>
    </location>
</feature>
<feature type="active site" description="Proton donor" evidence="1">
    <location>
        <position position="21"/>
    </location>
</feature>
<feature type="binding site" evidence="1">
    <location>
        <position position="19"/>
    </location>
    <ligand>
        <name>Mg(2+)</name>
        <dbReference type="ChEBI" id="CHEBI:18420"/>
    </ligand>
</feature>
<feature type="binding site" evidence="1">
    <location>
        <position position="21"/>
    </location>
    <ligand>
        <name>Mg(2+)</name>
        <dbReference type="ChEBI" id="CHEBI:18420"/>
    </ligand>
</feature>
<feature type="binding site" evidence="1">
    <location>
        <position position="30"/>
    </location>
    <ligand>
        <name>substrate</name>
    </ligand>
</feature>
<feature type="binding site" evidence="1">
    <location>
        <position position="105"/>
    </location>
    <ligand>
        <name>substrate</name>
    </ligand>
</feature>
<feature type="binding site" evidence="1">
    <location>
        <position position="190"/>
    </location>
    <ligand>
        <name>Mg(2+)</name>
        <dbReference type="ChEBI" id="CHEBI:18420"/>
    </ligand>
</feature>
<feature type="mutagenesis site" description="Loss of activity." evidence="3">
    <original>D</original>
    <variation>H</variation>
    <location>
        <position position="19"/>
    </location>
</feature>
<feature type="sequence conflict" description="In Ref. 5; AAM63155." evidence="4" ref="5">
    <location>
        <begin position="7"/>
        <end position="8"/>
    </location>
</feature>
<feature type="sequence conflict" description="In Ref. 5; AAM63155." evidence="4" ref="5">
    <original>A</original>
    <variation>V</variation>
    <location>
        <position position="229"/>
    </location>
</feature>
<organism>
    <name type="scientific">Arabidopsis thaliana</name>
    <name type="common">Mouse-ear cress</name>
    <dbReference type="NCBI Taxonomy" id="3702"/>
    <lineage>
        <taxon>Eukaryota</taxon>
        <taxon>Viridiplantae</taxon>
        <taxon>Streptophyta</taxon>
        <taxon>Embryophyta</taxon>
        <taxon>Tracheophyta</taxon>
        <taxon>Spermatophyta</taxon>
        <taxon>Magnoliopsida</taxon>
        <taxon>eudicotyledons</taxon>
        <taxon>Gunneridae</taxon>
        <taxon>Pentapetalae</taxon>
        <taxon>rosids</taxon>
        <taxon>malvids</taxon>
        <taxon>Brassicales</taxon>
        <taxon>Brassicaceae</taxon>
        <taxon>Camelineae</taxon>
        <taxon>Arabidopsis</taxon>
    </lineage>
</organism>
<accession>Q67YC0</accession>
<accession>Q8LDK9</accession>
<accession>Q9SSM6</accession>
<protein>
    <recommendedName>
        <fullName>Inorganic pyrophosphatase 1</fullName>
        <shortName>AtPPsPase1</shortName>
        <shortName>PPi phosphatase 1</shortName>
        <shortName>Pyrophosphate-specific phosphatase 1</shortName>
        <ecNumber>3.6.1.1</ecNumber>
    </recommendedName>
    <alternativeName>
        <fullName>Protein PHOSPHATE STARVATION-INDUCED GENE 2</fullName>
        <shortName>AtPS2</shortName>
    </alternativeName>
</protein>
<reference key="1">
    <citation type="journal article" date="2000" name="Nature">
        <title>Sequence and analysis of chromosome 1 of the plant Arabidopsis thaliana.</title>
        <authorList>
            <person name="Theologis A."/>
            <person name="Ecker J.R."/>
            <person name="Palm C.J."/>
            <person name="Federspiel N.A."/>
            <person name="Kaul S."/>
            <person name="White O."/>
            <person name="Alonso J."/>
            <person name="Altafi H."/>
            <person name="Araujo R."/>
            <person name="Bowman C.L."/>
            <person name="Brooks S.Y."/>
            <person name="Buehler E."/>
            <person name="Chan A."/>
            <person name="Chao Q."/>
            <person name="Chen H."/>
            <person name="Cheuk R.F."/>
            <person name="Chin C.W."/>
            <person name="Chung M.K."/>
            <person name="Conn L."/>
            <person name="Conway A.B."/>
            <person name="Conway A.R."/>
            <person name="Creasy T.H."/>
            <person name="Dewar K."/>
            <person name="Dunn P."/>
            <person name="Etgu P."/>
            <person name="Feldblyum T.V."/>
            <person name="Feng J.-D."/>
            <person name="Fong B."/>
            <person name="Fujii C.Y."/>
            <person name="Gill J.E."/>
            <person name="Goldsmith A.D."/>
            <person name="Haas B."/>
            <person name="Hansen N.F."/>
            <person name="Hughes B."/>
            <person name="Huizar L."/>
            <person name="Hunter J.L."/>
            <person name="Jenkins J."/>
            <person name="Johnson-Hopson C."/>
            <person name="Khan S."/>
            <person name="Khaykin E."/>
            <person name="Kim C.J."/>
            <person name="Koo H.L."/>
            <person name="Kremenetskaia I."/>
            <person name="Kurtz D.B."/>
            <person name="Kwan A."/>
            <person name="Lam B."/>
            <person name="Langin-Hooper S."/>
            <person name="Lee A."/>
            <person name="Lee J.M."/>
            <person name="Lenz C.A."/>
            <person name="Li J.H."/>
            <person name="Li Y.-P."/>
            <person name="Lin X."/>
            <person name="Liu S.X."/>
            <person name="Liu Z.A."/>
            <person name="Luros J.S."/>
            <person name="Maiti R."/>
            <person name="Marziali A."/>
            <person name="Militscher J."/>
            <person name="Miranda M."/>
            <person name="Nguyen M."/>
            <person name="Nierman W.C."/>
            <person name="Osborne B.I."/>
            <person name="Pai G."/>
            <person name="Peterson J."/>
            <person name="Pham P.K."/>
            <person name="Rizzo M."/>
            <person name="Rooney T."/>
            <person name="Rowley D."/>
            <person name="Sakano H."/>
            <person name="Salzberg S.L."/>
            <person name="Schwartz J.R."/>
            <person name="Shinn P."/>
            <person name="Southwick A.M."/>
            <person name="Sun H."/>
            <person name="Tallon L.J."/>
            <person name="Tambunga G."/>
            <person name="Toriumi M.J."/>
            <person name="Town C.D."/>
            <person name="Utterback T."/>
            <person name="Van Aken S."/>
            <person name="Vaysberg M."/>
            <person name="Vysotskaia V.S."/>
            <person name="Walker M."/>
            <person name="Wu D."/>
            <person name="Yu G."/>
            <person name="Fraser C.M."/>
            <person name="Venter J.C."/>
            <person name="Davis R.W."/>
        </authorList>
    </citation>
    <scope>NUCLEOTIDE SEQUENCE [LARGE SCALE GENOMIC DNA]</scope>
    <source>
        <strain>cv. Columbia</strain>
    </source>
</reference>
<reference key="2">
    <citation type="journal article" date="2017" name="Plant J.">
        <title>Araport11: a complete reannotation of the Arabidopsis thaliana reference genome.</title>
        <authorList>
            <person name="Cheng C.Y."/>
            <person name="Krishnakumar V."/>
            <person name="Chan A.P."/>
            <person name="Thibaud-Nissen F."/>
            <person name="Schobel S."/>
            <person name="Town C.D."/>
        </authorList>
    </citation>
    <scope>GENOME REANNOTATION</scope>
    <source>
        <strain>cv. Columbia</strain>
    </source>
</reference>
<reference key="3">
    <citation type="submission" date="2004-09" db="EMBL/GenBank/DDBJ databases">
        <title>Large-scale analysis of RIKEN Arabidopsis full-length (RAFL) cDNAs.</title>
        <authorList>
            <person name="Totoki Y."/>
            <person name="Seki M."/>
            <person name="Ishida J."/>
            <person name="Nakajima M."/>
            <person name="Enju A."/>
            <person name="Kamiya A."/>
            <person name="Narusaka M."/>
            <person name="Shin-i T."/>
            <person name="Nakagawa M."/>
            <person name="Sakamoto N."/>
            <person name="Oishi K."/>
            <person name="Kohara Y."/>
            <person name="Kobayashi M."/>
            <person name="Toyoda A."/>
            <person name="Sakaki Y."/>
            <person name="Sakurai T."/>
            <person name="Iida K."/>
            <person name="Akiyama K."/>
            <person name="Satou M."/>
            <person name="Toyoda T."/>
            <person name="Konagaya A."/>
            <person name="Carninci P."/>
            <person name="Kawai J."/>
            <person name="Hayashizaki Y."/>
            <person name="Shinozaki K."/>
        </authorList>
    </citation>
    <scope>NUCLEOTIDE SEQUENCE [LARGE SCALE MRNA]</scope>
    <source>
        <strain>cv. Columbia</strain>
    </source>
</reference>
<reference key="4">
    <citation type="submission" date="2007-03" db="EMBL/GenBank/DDBJ databases">
        <title>Arabidopsis ORF clones.</title>
        <authorList>
            <person name="Bautista V.R."/>
            <person name="Kim C.J."/>
            <person name="Chen H."/>
            <person name="Wu S.Y."/>
            <person name="De Los Reyes C."/>
            <person name="Ecker J.R."/>
        </authorList>
    </citation>
    <scope>NUCLEOTIDE SEQUENCE [LARGE SCALE MRNA]</scope>
    <source>
        <strain>cv. Columbia</strain>
    </source>
</reference>
<reference key="5">
    <citation type="submission" date="2002-03" db="EMBL/GenBank/DDBJ databases">
        <title>Full-length cDNA from Arabidopsis thaliana.</title>
        <authorList>
            <person name="Brover V.V."/>
            <person name="Troukhan M.E."/>
            <person name="Alexandrov N.A."/>
            <person name="Lu Y.-P."/>
            <person name="Flavell R.B."/>
            <person name="Feldmann K.A."/>
        </authorList>
    </citation>
    <scope>NUCLEOTIDE SEQUENCE [LARGE SCALE MRNA]</scope>
</reference>
<reference key="6">
    <citation type="journal article" date="2005" name="Proc. Natl. Acad. Sci. U.S.A.">
        <title>The Arabidopsis SUMO E3 ligase SIZ1 controls phosphate deficiency responses.</title>
        <authorList>
            <person name="Miura K."/>
            <person name="Rus A."/>
            <person name="Sharkhuu A."/>
            <person name="Yokoi S."/>
            <person name="Karthikeyan A.S."/>
            <person name="Raghothama K.G."/>
            <person name="Baek D."/>
            <person name="Koo Y.D."/>
            <person name="Jin J.B."/>
            <person name="Bressan R.A."/>
            <person name="Yun D.-J."/>
            <person name="Hasegawa P.M."/>
        </authorList>
    </citation>
    <scope>INDUCTION BY PHOSPHATE STARVATION</scope>
</reference>
<reference key="7">
    <citation type="journal article" date="2011" name="Biochim. Biophys. Acta">
        <title>The Arabidopsis thaliana phosphate starvation responsive gene AtPPsPase1 encodes a novel type of inorganic pyrophosphatase.</title>
        <authorList>
            <person name="May A."/>
            <person name="Berger S."/>
            <person name="Hertel T."/>
            <person name="Kock M."/>
        </authorList>
    </citation>
    <scope>FUNCTION</scope>
    <scope>BIOPHYSICOCHEMICAL PROPERTIES</scope>
    <scope>CATALYTIC ACTIVITY</scope>
    <scope>SUBUNIT</scope>
    <scope>INDUCTION BY PHOSPHATE STARVATION</scope>
    <scope>COFACTOR</scope>
    <scope>MUTAGENESIS OF ASP-19</scope>
    <source>
        <strain>cv. Columbia</strain>
    </source>
</reference>
<keyword id="KW-0378">Hydrolase</keyword>
<keyword id="KW-0460">Magnesium</keyword>
<keyword id="KW-0479">Metal-binding</keyword>
<keyword id="KW-1185">Reference proteome</keyword>
<proteinExistence type="evidence at protein level"/>
<evidence type="ECO:0000250" key="1"/>
<evidence type="ECO:0000269" key="2">
    <source>
    </source>
</evidence>
<evidence type="ECO:0000269" key="3">
    <source>
    </source>
</evidence>
<evidence type="ECO:0000305" key="4"/>
<name>PPSP1_ARATH</name>
<dbReference type="EC" id="3.6.1.1"/>
<dbReference type="EMBL" id="AC008017">
    <property type="protein sequence ID" value="AAD55648.1"/>
    <property type="status" value="ALT_SEQ"/>
    <property type="molecule type" value="Genomic_DNA"/>
</dbReference>
<dbReference type="EMBL" id="CP002684">
    <property type="protein sequence ID" value="AEE35403.1"/>
    <property type="molecule type" value="Genomic_DNA"/>
</dbReference>
<dbReference type="EMBL" id="AK176548">
    <property type="protein sequence ID" value="BAD44311.1"/>
    <property type="molecule type" value="mRNA"/>
</dbReference>
<dbReference type="EMBL" id="BT030334">
    <property type="protein sequence ID" value="ABO38747.1"/>
    <property type="molecule type" value="mRNA"/>
</dbReference>
<dbReference type="EMBL" id="AY085944">
    <property type="protein sequence ID" value="AAM63155.1"/>
    <property type="molecule type" value="mRNA"/>
</dbReference>
<dbReference type="PIR" id="E96755">
    <property type="entry name" value="E96755"/>
</dbReference>
<dbReference type="RefSeq" id="NP_565052.1">
    <property type="nucleotide sequence ID" value="NM_105959.3"/>
</dbReference>
<dbReference type="SMR" id="Q67YC0"/>
<dbReference type="FunCoup" id="Q67YC0">
    <property type="interactions" value="1287"/>
</dbReference>
<dbReference type="STRING" id="3702.Q67YC0"/>
<dbReference type="PaxDb" id="3702-AT1G73010.1"/>
<dbReference type="ProteomicsDB" id="226293"/>
<dbReference type="DNASU" id="843632"/>
<dbReference type="EnsemblPlants" id="AT1G73010.1">
    <property type="protein sequence ID" value="AT1G73010.1"/>
    <property type="gene ID" value="AT1G73010"/>
</dbReference>
<dbReference type="GeneID" id="843632"/>
<dbReference type="Gramene" id="AT1G73010.1">
    <property type="protein sequence ID" value="AT1G73010.1"/>
    <property type="gene ID" value="AT1G73010"/>
</dbReference>
<dbReference type="KEGG" id="ath:AT1G73010"/>
<dbReference type="Araport" id="AT1G73010"/>
<dbReference type="TAIR" id="AT1G73010">
    <property type="gene designation" value="PS2"/>
</dbReference>
<dbReference type="eggNOG" id="KOG3120">
    <property type="taxonomic scope" value="Eukaryota"/>
</dbReference>
<dbReference type="HOGENOM" id="CLU_068983_1_1_1"/>
<dbReference type="InParanoid" id="Q67YC0"/>
<dbReference type="OMA" id="HNLADCF"/>
<dbReference type="PhylomeDB" id="Q67YC0"/>
<dbReference type="BioCyc" id="ARA:AT1G73010-MONOMER"/>
<dbReference type="BRENDA" id="3.6.1.1">
    <property type="organism ID" value="399"/>
</dbReference>
<dbReference type="PRO" id="PR:Q67YC0"/>
<dbReference type="Proteomes" id="UP000006548">
    <property type="component" value="Chromosome 1"/>
</dbReference>
<dbReference type="ExpressionAtlas" id="Q67YC0">
    <property type="expression patterns" value="baseline and differential"/>
</dbReference>
<dbReference type="GO" id="GO:0004427">
    <property type="term" value="F:inorganic diphosphate phosphatase activity"/>
    <property type="evidence" value="ECO:0000314"/>
    <property type="project" value="UniProtKB"/>
</dbReference>
<dbReference type="GO" id="GO:0046872">
    <property type="term" value="F:metal ion binding"/>
    <property type="evidence" value="ECO:0007669"/>
    <property type="project" value="UniProtKB-KW"/>
</dbReference>
<dbReference type="GO" id="GO:0016791">
    <property type="term" value="F:phosphatase activity"/>
    <property type="evidence" value="ECO:0007669"/>
    <property type="project" value="InterPro"/>
</dbReference>
<dbReference type="GO" id="GO:0016462">
    <property type="term" value="F:pyrophosphatase activity"/>
    <property type="evidence" value="ECO:0000314"/>
    <property type="project" value="TAIR"/>
</dbReference>
<dbReference type="GO" id="GO:0071456">
    <property type="term" value="P:cellular response to hypoxia"/>
    <property type="evidence" value="ECO:0007007"/>
    <property type="project" value="TAIR"/>
</dbReference>
<dbReference type="GO" id="GO:0016036">
    <property type="term" value="P:cellular response to phosphate starvation"/>
    <property type="evidence" value="ECO:0000270"/>
    <property type="project" value="UniProtKB"/>
</dbReference>
<dbReference type="GO" id="GO:0051262">
    <property type="term" value="P:protein tetramerization"/>
    <property type="evidence" value="ECO:0000314"/>
    <property type="project" value="UniProtKB"/>
</dbReference>
<dbReference type="CDD" id="cd16418">
    <property type="entry name" value="HAD_Pase"/>
    <property type="match status" value="1"/>
</dbReference>
<dbReference type="FunFam" id="3.40.50.1000:FF:000338">
    <property type="entry name" value="Inorganic pyrophosphatase 2"/>
    <property type="match status" value="1"/>
</dbReference>
<dbReference type="Gene3D" id="3.40.50.1000">
    <property type="entry name" value="HAD superfamily/HAD-like"/>
    <property type="match status" value="1"/>
</dbReference>
<dbReference type="InterPro" id="IPR036412">
    <property type="entry name" value="HAD-like_sf"/>
</dbReference>
<dbReference type="InterPro" id="IPR006384">
    <property type="entry name" value="HAD_hydro_PyrdxlP_Pase-like"/>
</dbReference>
<dbReference type="InterPro" id="IPR023214">
    <property type="entry name" value="HAD_sf"/>
</dbReference>
<dbReference type="InterPro" id="IPR016965">
    <property type="entry name" value="Pase_PHOSPHO-typ"/>
</dbReference>
<dbReference type="NCBIfam" id="TIGR01489">
    <property type="entry name" value="DKMTPPase-SF"/>
    <property type="match status" value="1"/>
</dbReference>
<dbReference type="NCBIfam" id="TIGR01488">
    <property type="entry name" value="HAD-SF-IB"/>
    <property type="match status" value="1"/>
</dbReference>
<dbReference type="PANTHER" id="PTHR20889:SF12">
    <property type="entry name" value="LP01149P"/>
    <property type="match status" value="1"/>
</dbReference>
<dbReference type="PANTHER" id="PTHR20889">
    <property type="entry name" value="PHOSPHATASE, ORPHAN 1, 2"/>
    <property type="match status" value="1"/>
</dbReference>
<dbReference type="Pfam" id="PF06888">
    <property type="entry name" value="Put_Phosphatase"/>
    <property type="match status" value="1"/>
</dbReference>
<dbReference type="PIRSF" id="PIRSF031051">
    <property type="entry name" value="PyrdxlP_Pase_PHOSPHO2"/>
    <property type="match status" value="1"/>
</dbReference>
<dbReference type="SUPFAM" id="SSF56784">
    <property type="entry name" value="HAD-like"/>
    <property type="match status" value="1"/>
</dbReference>